<name>RS14Z_NANEQ</name>
<gene>
    <name evidence="1" type="primary">rps14</name>
    <name type="ordered locus">NEQ227</name>
</gene>
<organism>
    <name type="scientific">Nanoarchaeum equitans (strain Kin4-M)</name>
    <dbReference type="NCBI Taxonomy" id="228908"/>
    <lineage>
        <taxon>Archaea</taxon>
        <taxon>Nanobdellota</taxon>
        <taxon>Candidatus Nanoarchaeia</taxon>
        <taxon>Nanoarchaeales</taxon>
        <taxon>Nanoarchaeaceae</taxon>
        <taxon>Nanoarchaeum</taxon>
    </lineage>
</organism>
<protein>
    <recommendedName>
        <fullName evidence="1">Small ribosomal subunit protein uS14</fullName>
    </recommendedName>
    <alternativeName>
        <fullName evidence="2">30S ribosomal protein S14 type Z</fullName>
    </alternativeName>
</protein>
<evidence type="ECO:0000255" key="1">
    <source>
        <dbReference type="HAMAP-Rule" id="MF_01364"/>
    </source>
</evidence>
<evidence type="ECO:0000305" key="2"/>
<feature type="chain" id="PRO_0000269167" description="Small ribosomal subunit protein uS14">
    <location>
        <begin position="1"/>
        <end position="69"/>
    </location>
</feature>
<feature type="binding site" evidence="1">
    <location>
        <position position="33"/>
    </location>
    <ligand>
        <name>Zn(2+)</name>
        <dbReference type="ChEBI" id="CHEBI:29105"/>
    </ligand>
</feature>
<feature type="binding site" evidence="1">
    <location>
        <position position="36"/>
    </location>
    <ligand>
        <name>Zn(2+)</name>
        <dbReference type="ChEBI" id="CHEBI:29105"/>
    </ligand>
</feature>
<feature type="binding site" evidence="1">
    <location>
        <position position="51"/>
    </location>
    <ligand>
        <name>Zn(2+)</name>
        <dbReference type="ChEBI" id="CHEBI:29105"/>
    </ligand>
</feature>
<feature type="binding site" evidence="1">
    <location>
        <position position="54"/>
    </location>
    <ligand>
        <name>Zn(2+)</name>
        <dbReference type="ChEBI" id="CHEBI:29105"/>
    </ligand>
</feature>
<sequence length="69" mass="8195">MLKQSGHKHGKLLKILKHNKPKERKFGKGARRCERCGRYDGIIRRYGLYLCKDCFKEVAHELGFFKWGE</sequence>
<keyword id="KW-0479">Metal-binding</keyword>
<keyword id="KW-1185">Reference proteome</keyword>
<keyword id="KW-0687">Ribonucleoprotein</keyword>
<keyword id="KW-0689">Ribosomal protein</keyword>
<keyword id="KW-0694">RNA-binding</keyword>
<keyword id="KW-0699">rRNA-binding</keyword>
<keyword id="KW-0862">Zinc</keyword>
<accession>Q74NE6</accession>
<dbReference type="EMBL" id="AE017199">
    <property type="protein sequence ID" value="AAR39080.1"/>
    <property type="molecule type" value="Genomic_DNA"/>
</dbReference>
<dbReference type="SMR" id="Q74NE6"/>
<dbReference type="STRING" id="228908.NEQ227"/>
<dbReference type="EnsemblBacteria" id="AAR39080">
    <property type="protein sequence ID" value="AAR39080"/>
    <property type="gene ID" value="NEQ227"/>
</dbReference>
<dbReference type="KEGG" id="neq:NEQ227"/>
<dbReference type="PATRIC" id="fig|228908.8.peg.232"/>
<dbReference type="HOGENOM" id="CLU_177289_2_2_2"/>
<dbReference type="Proteomes" id="UP000000578">
    <property type="component" value="Chromosome"/>
</dbReference>
<dbReference type="GO" id="GO:0022627">
    <property type="term" value="C:cytosolic small ribosomal subunit"/>
    <property type="evidence" value="ECO:0007669"/>
    <property type="project" value="TreeGrafter"/>
</dbReference>
<dbReference type="GO" id="GO:0019843">
    <property type="term" value="F:rRNA binding"/>
    <property type="evidence" value="ECO:0007669"/>
    <property type="project" value="UniProtKB-UniRule"/>
</dbReference>
<dbReference type="GO" id="GO:0003735">
    <property type="term" value="F:structural constituent of ribosome"/>
    <property type="evidence" value="ECO:0007669"/>
    <property type="project" value="InterPro"/>
</dbReference>
<dbReference type="GO" id="GO:0008270">
    <property type="term" value="F:zinc ion binding"/>
    <property type="evidence" value="ECO:0007669"/>
    <property type="project" value="UniProtKB-UniRule"/>
</dbReference>
<dbReference type="GO" id="GO:0002181">
    <property type="term" value="P:cytoplasmic translation"/>
    <property type="evidence" value="ECO:0007669"/>
    <property type="project" value="TreeGrafter"/>
</dbReference>
<dbReference type="FunFam" id="4.10.830.10:FF:000002">
    <property type="entry name" value="40S ribosomal protein S29"/>
    <property type="match status" value="1"/>
</dbReference>
<dbReference type="Gene3D" id="4.10.830.10">
    <property type="entry name" value="30s Ribosomal Protein S14, Chain N"/>
    <property type="match status" value="1"/>
</dbReference>
<dbReference type="HAMAP" id="MF_01364_A">
    <property type="entry name" value="Ribosomal_uS14_2_A"/>
    <property type="match status" value="1"/>
</dbReference>
<dbReference type="InterPro" id="IPR001209">
    <property type="entry name" value="Ribosomal_uS14"/>
</dbReference>
<dbReference type="InterPro" id="IPR023676">
    <property type="entry name" value="Ribosomal_uS14_arc"/>
</dbReference>
<dbReference type="InterPro" id="IPR039744">
    <property type="entry name" value="RIbosomal_uS14_euk_arc"/>
</dbReference>
<dbReference type="InterPro" id="IPR043140">
    <property type="entry name" value="Ribosomal_uS14_sf"/>
</dbReference>
<dbReference type="NCBIfam" id="NF004424">
    <property type="entry name" value="PRK05766.1"/>
    <property type="match status" value="1"/>
</dbReference>
<dbReference type="PANTHER" id="PTHR12010">
    <property type="entry name" value="40S RIBOSOMAL PROTEIN S29"/>
    <property type="match status" value="1"/>
</dbReference>
<dbReference type="PANTHER" id="PTHR12010:SF2">
    <property type="entry name" value="40S RIBOSOMAL PROTEIN S29"/>
    <property type="match status" value="1"/>
</dbReference>
<dbReference type="Pfam" id="PF00253">
    <property type="entry name" value="Ribosomal_S14"/>
    <property type="match status" value="1"/>
</dbReference>
<dbReference type="SUPFAM" id="SSF57716">
    <property type="entry name" value="Glucocorticoid receptor-like (DNA-binding domain)"/>
    <property type="match status" value="1"/>
</dbReference>
<reference key="1">
    <citation type="journal article" date="2003" name="Proc. Natl. Acad. Sci. U.S.A.">
        <title>The genome of Nanoarchaeum equitans: insights into early archaeal evolution and derived parasitism.</title>
        <authorList>
            <person name="Waters E."/>
            <person name="Hohn M.J."/>
            <person name="Ahel I."/>
            <person name="Graham D.E."/>
            <person name="Adams M.D."/>
            <person name="Barnstead M."/>
            <person name="Beeson K.Y."/>
            <person name="Bibbs L."/>
            <person name="Bolanos R."/>
            <person name="Keller M."/>
            <person name="Kretz K."/>
            <person name="Lin X."/>
            <person name="Mathur E."/>
            <person name="Ni J."/>
            <person name="Podar M."/>
            <person name="Richardson T."/>
            <person name="Sutton G.G."/>
            <person name="Simon M."/>
            <person name="Soell D."/>
            <person name="Stetter K.O."/>
            <person name="Short J.M."/>
            <person name="Noorderwier M."/>
        </authorList>
    </citation>
    <scope>NUCLEOTIDE SEQUENCE [LARGE SCALE GENOMIC DNA]</scope>
    <source>
        <strain>Kin4-M</strain>
    </source>
</reference>
<proteinExistence type="inferred from homology"/>
<comment type="function">
    <text evidence="1">Binds 16S rRNA, required for the assembly of 30S particles.</text>
</comment>
<comment type="cofactor">
    <cofactor evidence="1">
        <name>Zn(2+)</name>
        <dbReference type="ChEBI" id="CHEBI:29105"/>
    </cofactor>
    <text evidence="1">Binds 1 zinc ion per subunit.</text>
</comment>
<comment type="subunit">
    <text evidence="1">Part of the 30S ribosomal subunit.</text>
</comment>
<comment type="similarity">
    <text evidence="1">Belongs to the universal ribosomal protein uS14 family. Zinc-binding uS14 subfamily.</text>
</comment>